<keyword id="KW-0093">Biotin biosynthesis</keyword>
<keyword id="KW-0663">Pyridoxal phosphate</keyword>
<keyword id="KW-0808">Transferase</keyword>
<sequence length="384" mass="41620">MSWQEKINAALDARRAADALRRRYPVAQGAGRWLVADDRQYLNFSSNDYLGLSHHPQIIRAWKQGAEQFGVGSGGSGHVSGYSVAHQALEEELAEWLGYSRALLFISGFAANQAVIAAMMAKEDRIVADRLSHASLLEAASLSPSQLRRFVHNDVTHLARLLASPCPGQQLVVTEGVFSMDGDSAPLAEIQQVTQQHNGWLMVDDAHGTGVIGEQGRGTCWLQKVKPELLVVTFGKGFGVSGAAVLCSSTVADYLLQFARHLIYSTSMPPAQAQALRASLAVIRSDEGDARREKLAALITRFRAGVQDLPFTLADSCSAIQPLIVGDNSRALQLAEKLRQQGCWVTAIRPPTVPSGTARLRLTLTAAHEMQDIDRLLEVLHGNG</sequence>
<proteinExistence type="inferred from homology"/>
<comment type="function">
    <text evidence="1">Catalyzes the decarboxylative condensation of pimeloyl-[acyl-carrier protein] and L-alanine to produce 8-amino-7-oxononanoate (AON), [acyl-carrier protein], and carbon dioxide.</text>
</comment>
<comment type="catalytic activity">
    <reaction evidence="1">
        <text>6-carboxyhexanoyl-[ACP] + L-alanine + H(+) = (8S)-8-amino-7-oxononanoate + holo-[ACP] + CO2</text>
        <dbReference type="Rhea" id="RHEA:42288"/>
        <dbReference type="Rhea" id="RHEA-COMP:9685"/>
        <dbReference type="Rhea" id="RHEA-COMP:9955"/>
        <dbReference type="ChEBI" id="CHEBI:15378"/>
        <dbReference type="ChEBI" id="CHEBI:16526"/>
        <dbReference type="ChEBI" id="CHEBI:57972"/>
        <dbReference type="ChEBI" id="CHEBI:64479"/>
        <dbReference type="ChEBI" id="CHEBI:78846"/>
        <dbReference type="ChEBI" id="CHEBI:149468"/>
        <dbReference type="EC" id="2.3.1.47"/>
    </reaction>
</comment>
<comment type="cofactor">
    <cofactor evidence="1">
        <name>pyridoxal 5'-phosphate</name>
        <dbReference type="ChEBI" id="CHEBI:597326"/>
    </cofactor>
</comment>
<comment type="pathway">
    <text evidence="1">Cofactor biosynthesis; biotin biosynthesis.</text>
</comment>
<comment type="subunit">
    <text evidence="1">Homodimer.</text>
</comment>
<comment type="similarity">
    <text evidence="1">Belongs to the class-II pyridoxal-phosphate-dependent aminotransferase family. BioF subfamily.</text>
</comment>
<name>BIOF_ECO5E</name>
<evidence type="ECO:0000255" key="1">
    <source>
        <dbReference type="HAMAP-Rule" id="MF_01693"/>
    </source>
</evidence>
<reference key="1">
    <citation type="journal article" date="2011" name="Proc. Natl. Acad. Sci. U.S.A.">
        <title>Genomic anatomy of Escherichia coli O157:H7 outbreaks.</title>
        <authorList>
            <person name="Eppinger M."/>
            <person name="Mammel M.K."/>
            <person name="Leclerc J.E."/>
            <person name="Ravel J."/>
            <person name="Cebula T.A."/>
        </authorList>
    </citation>
    <scope>NUCLEOTIDE SEQUENCE [LARGE SCALE GENOMIC DNA]</scope>
    <source>
        <strain>EC4115 / EHEC</strain>
    </source>
</reference>
<gene>
    <name evidence="1" type="primary">bioF</name>
    <name type="ordered locus">ECH74115_0924</name>
</gene>
<dbReference type="EC" id="2.3.1.47" evidence="1"/>
<dbReference type="EMBL" id="CP001164">
    <property type="protein sequence ID" value="ACI37710.1"/>
    <property type="molecule type" value="Genomic_DNA"/>
</dbReference>
<dbReference type="RefSeq" id="WP_000118816.1">
    <property type="nucleotide sequence ID" value="NC_011353.1"/>
</dbReference>
<dbReference type="SMR" id="B5YRL5"/>
<dbReference type="KEGG" id="ecf:ECH74115_0924"/>
<dbReference type="HOGENOM" id="CLU_015846_11_2_6"/>
<dbReference type="UniPathway" id="UPA00078"/>
<dbReference type="GO" id="GO:0008710">
    <property type="term" value="F:8-amino-7-oxononanoate synthase activity"/>
    <property type="evidence" value="ECO:0007669"/>
    <property type="project" value="UniProtKB-UniRule"/>
</dbReference>
<dbReference type="GO" id="GO:0030170">
    <property type="term" value="F:pyridoxal phosphate binding"/>
    <property type="evidence" value="ECO:0007669"/>
    <property type="project" value="UniProtKB-UniRule"/>
</dbReference>
<dbReference type="GO" id="GO:0009102">
    <property type="term" value="P:biotin biosynthetic process"/>
    <property type="evidence" value="ECO:0007669"/>
    <property type="project" value="UniProtKB-UniRule"/>
</dbReference>
<dbReference type="CDD" id="cd06454">
    <property type="entry name" value="KBL_like"/>
    <property type="match status" value="1"/>
</dbReference>
<dbReference type="FunFam" id="3.40.640.10:FF:000095">
    <property type="entry name" value="8-amino-7-oxononanoate synthase"/>
    <property type="match status" value="1"/>
</dbReference>
<dbReference type="FunFam" id="3.90.1150.10:FF:000036">
    <property type="entry name" value="8-amino-7-oxononanoate synthase"/>
    <property type="match status" value="1"/>
</dbReference>
<dbReference type="Gene3D" id="3.90.1150.10">
    <property type="entry name" value="Aspartate Aminotransferase, domain 1"/>
    <property type="match status" value="1"/>
</dbReference>
<dbReference type="Gene3D" id="3.40.640.10">
    <property type="entry name" value="Type I PLP-dependent aspartate aminotransferase-like (Major domain)"/>
    <property type="match status" value="1"/>
</dbReference>
<dbReference type="HAMAP" id="MF_01693">
    <property type="entry name" value="BioF_aminotrans_2"/>
    <property type="match status" value="1"/>
</dbReference>
<dbReference type="InterPro" id="IPR001917">
    <property type="entry name" value="Aminotrans_II_pyridoxalP_BS"/>
</dbReference>
<dbReference type="InterPro" id="IPR004839">
    <property type="entry name" value="Aminotransferase_I/II_large"/>
</dbReference>
<dbReference type="InterPro" id="IPR050087">
    <property type="entry name" value="AON_synthase_class-II"/>
</dbReference>
<dbReference type="InterPro" id="IPR004723">
    <property type="entry name" value="AONS_Archaea/Proteobacteria"/>
</dbReference>
<dbReference type="InterPro" id="IPR022834">
    <property type="entry name" value="AONS_Proteobacteria"/>
</dbReference>
<dbReference type="InterPro" id="IPR015424">
    <property type="entry name" value="PyrdxlP-dep_Trfase"/>
</dbReference>
<dbReference type="InterPro" id="IPR015421">
    <property type="entry name" value="PyrdxlP-dep_Trfase_major"/>
</dbReference>
<dbReference type="InterPro" id="IPR015422">
    <property type="entry name" value="PyrdxlP-dep_Trfase_small"/>
</dbReference>
<dbReference type="NCBIfam" id="TIGR00858">
    <property type="entry name" value="bioF"/>
    <property type="match status" value="1"/>
</dbReference>
<dbReference type="PANTHER" id="PTHR13693:SF100">
    <property type="entry name" value="8-AMINO-7-OXONONANOATE SYNTHASE"/>
    <property type="match status" value="1"/>
</dbReference>
<dbReference type="PANTHER" id="PTHR13693">
    <property type="entry name" value="CLASS II AMINOTRANSFERASE/8-AMINO-7-OXONONANOATE SYNTHASE"/>
    <property type="match status" value="1"/>
</dbReference>
<dbReference type="Pfam" id="PF00155">
    <property type="entry name" value="Aminotran_1_2"/>
    <property type="match status" value="1"/>
</dbReference>
<dbReference type="SUPFAM" id="SSF53383">
    <property type="entry name" value="PLP-dependent transferases"/>
    <property type="match status" value="1"/>
</dbReference>
<dbReference type="PROSITE" id="PS00599">
    <property type="entry name" value="AA_TRANSFER_CLASS_2"/>
    <property type="match status" value="1"/>
</dbReference>
<feature type="chain" id="PRO_0000380972" description="8-amino-7-oxononanoate synthase">
    <location>
        <begin position="1"/>
        <end position="384"/>
    </location>
</feature>
<feature type="binding site" evidence="1">
    <location>
        <position position="21"/>
    </location>
    <ligand>
        <name>substrate</name>
    </ligand>
</feature>
<feature type="binding site" evidence="1">
    <location>
        <begin position="108"/>
        <end position="109"/>
    </location>
    <ligand>
        <name>pyridoxal 5'-phosphate</name>
        <dbReference type="ChEBI" id="CHEBI:597326"/>
    </ligand>
</feature>
<feature type="binding site" evidence="1">
    <location>
        <position position="133"/>
    </location>
    <ligand>
        <name>substrate</name>
    </ligand>
</feature>
<feature type="binding site" evidence="1">
    <location>
        <position position="179"/>
    </location>
    <ligand>
        <name>pyridoxal 5'-phosphate</name>
        <dbReference type="ChEBI" id="CHEBI:597326"/>
    </ligand>
</feature>
<feature type="binding site" evidence="1">
    <location>
        <position position="207"/>
    </location>
    <ligand>
        <name>pyridoxal 5'-phosphate</name>
        <dbReference type="ChEBI" id="CHEBI:597326"/>
    </ligand>
</feature>
<feature type="binding site" evidence="1">
    <location>
        <position position="233"/>
    </location>
    <ligand>
        <name>pyridoxal 5'-phosphate</name>
        <dbReference type="ChEBI" id="CHEBI:597326"/>
    </ligand>
</feature>
<feature type="binding site" evidence="1">
    <location>
        <position position="352"/>
    </location>
    <ligand>
        <name>substrate</name>
    </ligand>
</feature>
<feature type="modified residue" description="N6-(pyridoxal phosphate)lysine" evidence="1">
    <location>
        <position position="236"/>
    </location>
</feature>
<organism>
    <name type="scientific">Escherichia coli O157:H7 (strain EC4115 / EHEC)</name>
    <dbReference type="NCBI Taxonomy" id="444450"/>
    <lineage>
        <taxon>Bacteria</taxon>
        <taxon>Pseudomonadati</taxon>
        <taxon>Pseudomonadota</taxon>
        <taxon>Gammaproteobacteria</taxon>
        <taxon>Enterobacterales</taxon>
        <taxon>Enterobacteriaceae</taxon>
        <taxon>Escherichia</taxon>
    </lineage>
</organism>
<accession>B5YRL5</accession>
<protein>
    <recommendedName>
        <fullName evidence="1">8-amino-7-oxononanoate synthase</fullName>
        <shortName evidence="1">AONS</shortName>
        <ecNumber evidence="1">2.3.1.47</ecNumber>
    </recommendedName>
    <alternativeName>
        <fullName evidence="1">7-keto-8-amino-pelargonic acid synthase</fullName>
        <shortName evidence="1">7-KAP synthase</shortName>
        <shortName evidence="1">KAPA synthase</shortName>
    </alternativeName>
    <alternativeName>
        <fullName evidence="1">8-amino-7-ketopelargonate synthase</fullName>
    </alternativeName>
</protein>